<comment type="function">
    <text evidence="1">Component of the dark-operative protochlorophyllide reductase (DPOR) that uses Mg-ATP and reduced ferredoxin to reduce ring D of protochlorophyllide (Pchlide) to form chlorophyllide a (Chlide). This reaction is light-independent. The NB-protein (ChlN-ChlB) is the catalytic component of the complex (By similarity).</text>
</comment>
<comment type="catalytic activity">
    <reaction>
        <text>chlorophyllide a + oxidized 2[4Fe-4S]-[ferredoxin] + 2 ADP + 2 phosphate = protochlorophyllide a + reduced 2[4Fe-4S]-[ferredoxin] + 2 ATP + 2 H2O</text>
        <dbReference type="Rhea" id="RHEA:28202"/>
        <dbReference type="Rhea" id="RHEA-COMP:10002"/>
        <dbReference type="Rhea" id="RHEA-COMP:10004"/>
        <dbReference type="ChEBI" id="CHEBI:15377"/>
        <dbReference type="ChEBI" id="CHEBI:30616"/>
        <dbReference type="ChEBI" id="CHEBI:33722"/>
        <dbReference type="ChEBI" id="CHEBI:33723"/>
        <dbReference type="ChEBI" id="CHEBI:43474"/>
        <dbReference type="ChEBI" id="CHEBI:83348"/>
        <dbReference type="ChEBI" id="CHEBI:83350"/>
        <dbReference type="ChEBI" id="CHEBI:456216"/>
        <dbReference type="EC" id="1.3.7.7"/>
    </reaction>
</comment>
<comment type="cofactor">
    <cofactor evidence="1">
        <name>[4Fe-4S] cluster</name>
        <dbReference type="ChEBI" id="CHEBI:49883"/>
    </cofactor>
    <text evidence="1">Binds 1 [4Fe-4S] cluster per heterodimer. The cluster is bound at the heterodimer interface by residues from both subunits.</text>
</comment>
<comment type="pathway">
    <text>Porphyrin-containing compound metabolism; chlorophyll biosynthesis (light-independent).</text>
</comment>
<comment type="subunit">
    <text evidence="1">Protochlorophyllide reductase is composed of three subunits; ChlL, ChlN and ChlB. Forms a heterotetramer of two ChlB and two ChlN subunits (By similarity).</text>
</comment>
<comment type="subcellular location">
    <subcellularLocation>
        <location>Plastid</location>
        <location>Chloroplast</location>
    </subcellularLocation>
</comment>
<comment type="similarity">
    <text evidence="3">Belongs to the ChlB/BchB/BchZ family.</text>
</comment>
<proteinExistence type="inferred from homology"/>
<geneLocation type="chloroplast"/>
<accession>P37856</accession>
<dbReference type="EC" id="1.3.7.7"/>
<dbReference type="EMBL" id="L25777">
    <property type="protein sequence ID" value="AAC37497.1"/>
    <property type="molecule type" value="Genomic_DNA"/>
</dbReference>
<dbReference type="SMR" id="P37856"/>
<dbReference type="UniPathway" id="UPA00670"/>
<dbReference type="GO" id="GO:0009507">
    <property type="term" value="C:chloroplast"/>
    <property type="evidence" value="ECO:0007669"/>
    <property type="project" value="UniProtKB-SubCell"/>
</dbReference>
<dbReference type="GO" id="GO:0051539">
    <property type="term" value="F:4 iron, 4 sulfur cluster binding"/>
    <property type="evidence" value="ECO:0007669"/>
    <property type="project" value="UniProtKB-KW"/>
</dbReference>
<dbReference type="GO" id="GO:0005524">
    <property type="term" value="F:ATP binding"/>
    <property type="evidence" value="ECO:0007669"/>
    <property type="project" value="UniProtKB-KW"/>
</dbReference>
<dbReference type="GO" id="GO:0046872">
    <property type="term" value="F:metal ion binding"/>
    <property type="evidence" value="ECO:0007669"/>
    <property type="project" value="UniProtKB-KW"/>
</dbReference>
<dbReference type="GO" id="GO:0016491">
    <property type="term" value="F:oxidoreductase activity"/>
    <property type="evidence" value="ECO:0007669"/>
    <property type="project" value="UniProtKB-KW"/>
</dbReference>
<dbReference type="GO" id="GO:0036068">
    <property type="term" value="P:light-independent chlorophyll biosynthetic process"/>
    <property type="evidence" value="ECO:0007669"/>
    <property type="project" value="UniProtKB-UniPathway"/>
</dbReference>
<dbReference type="GO" id="GO:0015979">
    <property type="term" value="P:photosynthesis"/>
    <property type="evidence" value="ECO:0007669"/>
    <property type="project" value="UniProtKB-KW"/>
</dbReference>
<dbReference type="Gene3D" id="3.40.50.1980">
    <property type="entry name" value="Nitrogenase molybdenum iron protein domain"/>
    <property type="match status" value="1"/>
</dbReference>
<dbReference type="InterPro" id="IPR050152">
    <property type="entry name" value="ChlB/BchB/BchZ"/>
</dbReference>
<dbReference type="InterPro" id="IPR000510">
    <property type="entry name" value="Nase/OxRdtase_comp1"/>
</dbReference>
<dbReference type="PANTHER" id="PTHR33712">
    <property type="entry name" value="LIGHT-INDEPENDENT PROTOCHLOROPHYLLIDE REDUCTASE SUBUNIT B"/>
    <property type="match status" value="1"/>
</dbReference>
<dbReference type="PANTHER" id="PTHR33712:SF7">
    <property type="entry name" value="LIGHT-INDEPENDENT PROTOCHLOROPHYLLIDE REDUCTASE SUBUNIT B"/>
    <property type="match status" value="1"/>
</dbReference>
<dbReference type="Pfam" id="PF00148">
    <property type="entry name" value="Oxidored_nitro"/>
    <property type="match status" value="1"/>
</dbReference>
<dbReference type="SUPFAM" id="SSF53807">
    <property type="entry name" value="Helical backbone' metal receptor"/>
    <property type="match status" value="1"/>
</dbReference>
<evidence type="ECO:0000250" key="1"/>
<evidence type="ECO:0000256" key="2">
    <source>
        <dbReference type="SAM" id="MobiDB-lite"/>
    </source>
</evidence>
<evidence type="ECO:0000305" key="3"/>
<feature type="chain" id="PRO_0000219844" description="Light-independent protochlorophyllide reductase subunit B">
    <location>
        <begin position="1" status="less than"/>
        <end position="103" status="greater than"/>
    </location>
</feature>
<feature type="region of interest" description="Disordered" evidence="2">
    <location>
        <begin position="81"/>
        <end position="103"/>
    </location>
</feature>
<feature type="compositionally biased region" description="Basic and acidic residues" evidence="2">
    <location>
        <begin position="86"/>
        <end position="103"/>
    </location>
</feature>
<feature type="non-terminal residue">
    <location>
        <position position="1"/>
    </location>
</feature>
<feature type="non-terminal residue">
    <location>
        <position position="103"/>
    </location>
</feature>
<keyword id="KW-0004">4Fe-4S</keyword>
<keyword id="KW-0067">ATP-binding</keyword>
<keyword id="KW-0149">Chlorophyll biosynthesis</keyword>
<keyword id="KW-0150">Chloroplast</keyword>
<keyword id="KW-0408">Iron</keyword>
<keyword id="KW-0411">Iron-sulfur</keyword>
<keyword id="KW-0479">Metal-binding</keyword>
<keyword id="KW-0547">Nucleotide-binding</keyword>
<keyword id="KW-0560">Oxidoreductase</keyword>
<keyword id="KW-0602">Photosynthesis</keyword>
<keyword id="KW-0934">Plastid</keyword>
<organism>
    <name type="scientific">Selaginella mollis</name>
    <name type="common">Spikemoss</name>
    <dbReference type="NCBI Taxonomy" id="34167"/>
    <lineage>
        <taxon>Eukaryota</taxon>
        <taxon>Viridiplantae</taxon>
        <taxon>Streptophyta</taxon>
        <taxon>Embryophyta</taxon>
        <taxon>Tracheophyta</taxon>
        <taxon>Lycopodiopsida</taxon>
        <taxon>Selaginellales</taxon>
        <taxon>Selaginellaceae</taxon>
        <taxon>Selaginella</taxon>
    </lineage>
</organism>
<sequence>KRSSRDIGTRINQIIPEGEFVGNLNDLPKARFNFVPHREVGLMTAVYLDEEFGMPCISTTPAGIIDTAECIRQMQERVGKWASAPPKEKVDHEPYIDQHTRSV</sequence>
<name>CHLB_SELMO</name>
<protein>
    <recommendedName>
        <fullName>Light-independent protochlorophyllide reductase subunit B</fullName>
        <shortName>DPOR subunit B</shortName>
        <shortName>LI-POR subunit B</shortName>
        <ecNumber>1.3.7.7</ecNumber>
    </recommendedName>
</protein>
<reference key="1">
    <citation type="journal article" date="1996" name="Mol. Phylogenet. Evol.">
        <title>Phylogenetic inferences from chloroplast chlB gene sequences of Nephrolepis exaltata (Filicopsida), Ephedra altissima (Gnetopsida), and diverse land plants.</title>
        <authorList>
            <person name="Boivin R."/>
            <person name="Richard M."/>
            <person name="Beauseigle D."/>
            <person name="Bousquet J."/>
            <person name="Bellemare G."/>
        </authorList>
    </citation>
    <scope>NUCLEOTIDE SEQUENCE [GENOMIC DNA]</scope>
</reference>
<gene>
    <name type="primary">chlB</name>
</gene>